<keyword id="KW-0378">Hydrolase</keyword>
<keyword id="KW-0479">Metal-binding</keyword>
<keyword id="KW-0546">Nucleotide metabolism</keyword>
<keyword id="KW-1185">Reference proteome</keyword>
<keyword id="KW-0862">Zinc</keyword>
<dbReference type="EC" id="3.5.4.4" evidence="1"/>
<dbReference type="EMBL" id="CP000423">
    <property type="protein sequence ID" value="ABJ70954.1"/>
    <property type="molecule type" value="Genomic_DNA"/>
</dbReference>
<dbReference type="RefSeq" id="WP_011674821.1">
    <property type="nucleotide sequence ID" value="NC_008526.1"/>
</dbReference>
<dbReference type="RefSeq" id="YP_807396.1">
    <property type="nucleotide sequence ID" value="NC_008526.1"/>
</dbReference>
<dbReference type="SMR" id="Q036B8"/>
<dbReference type="STRING" id="321967.LSEI_2207"/>
<dbReference type="PaxDb" id="321967-LSEI_2207"/>
<dbReference type="KEGG" id="lca:LSEI_2207"/>
<dbReference type="PATRIC" id="fig|321967.11.peg.2169"/>
<dbReference type="HOGENOM" id="CLU_039228_0_0_9"/>
<dbReference type="Proteomes" id="UP000001651">
    <property type="component" value="Chromosome"/>
</dbReference>
<dbReference type="GO" id="GO:0005829">
    <property type="term" value="C:cytosol"/>
    <property type="evidence" value="ECO:0007669"/>
    <property type="project" value="TreeGrafter"/>
</dbReference>
<dbReference type="GO" id="GO:0046936">
    <property type="term" value="F:2'-deoxyadenosine deaminase activity"/>
    <property type="evidence" value="ECO:0007669"/>
    <property type="project" value="RHEA"/>
</dbReference>
<dbReference type="GO" id="GO:0004000">
    <property type="term" value="F:adenosine deaminase activity"/>
    <property type="evidence" value="ECO:0007669"/>
    <property type="project" value="UniProtKB-UniRule"/>
</dbReference>
<dbReference type="GO" id="GO:0008270">
    <property type="term" value="F:zinc ion binding"/>
    <property type="evidence" value="ECO:0007669"/>
    <property type="project" value="UniProtKB-UniRule"/>
</dbReference>
<dbReference type="GO" id="GO:0006154">
    <property type="term" value="P:adenosine catabolic process"/>
    <property type="evidence" value="ECO:0007669"/>
    <property type="project" value="TreeGrafter"/>
</dbReference>
<dbReference type="GO" id="GO:0043103">
    <property type="term" value="P:hypoxanthine salvage"/>
    <property type="evidence" value="ECO:0007669"/>
    <property type="project" value="TreeGrafter"/>
</dbReference>
<dbReference type="GO" id="GO:0046103">
    <property type="term" value="P:inosine biosynthetic process"/>
    <property type="evidence" value="ECO:0007669"/>
    <property type="project" value="TreeGrafter"/>
</dbReference>
<dbReference type="GO" id="GO:0009117">
    <property type="term" value="P:nucleotide metabolic process"/>
    <property type="evidence" value="ECO:0007669"/>
    <property type="project" value="UniProtKB-KW"/>
</dbReference>
<dbReference type="GO" id="GO:0009168">
    <property type="term" value="P:purine ribonucleoside monophosphate biosynthetic process"/>
    <property type="evidence" value="ECO:0007669"/>
    <property type="project" value="UniProtKB-UniRule"/>
</dbReference>
<dbReference type="Gene3D" id="3.20.20.140">
    <property type="entry name" value="Metal-dependent hydrolases"/>
    <property type="match status" value="1"/>
</dbReference>
<dbReference type="HAMAP" id="MF_00540">
    <property type="entry name" value="A_deaminase"/>
    <property type="match status" value="1"/>
</dbReference>
<dbReference type="InterPro" id="IPR028893">
    <property type="entry name" value="A_deaminase"/>
</dbReference>
<dbReference type="InterPro" id="IPR001365">
    <property type="entry name" value="A_deaminase_dom"/>
</dbReference>
<dbReference type="InterPro" id="IPR006330">
    <property type="entry name" value="Ado/ade_deaminase"/>
</dbReference>
<dbReference type="InterPro" id="IPR032466">
    <property type="entry name" value="Metal_Hydrolase"/>
</dbReference>
<dbReference type="NCBIfam" id="TIGR01430">
    <property type="entry name" value="aden_deam"/>
    <property type="match status" value="1"/>
</dbReference>
<dbReference type="PANTHER" id="PTHR11409">
    <property type="entry name" value="ADENOSINE DEAMINASE"/>
    <property type="match status" value="1"/>
</dbReference>
<dbReference type="PANTHER" id="PTHR11409:SF43">
    <property type="entry name" value="ADENOSINE DEAMINASE"/>
    <property type="match status" value="1"/>
</dbReference>
<dbReference type="Pfam" id="PF00962">
    <property type="entry name" value="A_deaminase"/>
    <property type="match status" value="1"/>
</dbReference>
<dbReference type="SUPFAM" id="SSF51556">
    <property type="entry name" value="Metallo-dependent hydrolases"/>
    <property type="match status" value="1"/>
</dbReference>
<organism>
    <name type="scientific">Lacticaseibacillus paracasei (strain ATCC 334 / BCRC 17002 / CCUG 31169 / CIP 107868 / KCTC 3260 / NRRL B-441)</name>
    <name type="common">Lactobacillus paracasei</name>
    <dbReference type="NCBI Taxonomy" id="321967"/>
    <lineage>
        <taxon>Bacteria</taxon>
        <taxon>Bacillati</taxon>
        <taxon>Bacillota</taxon>
        <taxon>Bacilli</taxon>
        <taxon>Lactobacillales</taxon>
        <taxon>Lactobacillaceae</taxon>
        <taxon>Lacticaseibacillus</taxon>
    </lineage>
</organism>
<sequence>MDFQTLHQLSKTELHCHLDGSLSLSCIRQLAKMIDRKLPATDDELRRLVQAPADSENLGDYLKAFDFVAPLLQTKKALQLAAYDVVEQAAEENVRYIEIRFAPVFSLAGGLSLVEATQAVIEGLHQGMATYDIMAKALVCGMRQLPNTDNQTMFKTTAPLLGSTLVGGDFAGNEADFPTNVCAPAIKTAQSLGVPLTFHAGECHCPQNIGEAVRLGIPRIGHATACFDQPALIEKIVETGTTVELCLTSNLQTKAARTLAEFPYQALKKAGAKITINTDNRTVSNTTLTQEYQRYQQAFGTTAADFLAFNLNAIDAAFIPDADKKSLRDQLHQDYATYC</sequence>
<feature type="chain" id="PRO_1000017665" description="Adenosine deaminase">
    <location>
        <begin position="1"/>
        <end position="339"/>
    </location>
</feature>
<feature type="active site" description="Proton donor" evidence="1">
    <location>
        <position position="202"/>
    </location>
</feature>
<feature type="binding site" evidence="1">
    <location>
        <position position="15"/>
    </location>
    <ligand>
        <name>Zn(2+)</name>
        <dbReference type="ChEBI" id="CHEBI:29105"/>
        <note>catalytic</note>
    </ligand>
</feature>
<feature type="binding site" evidence="1">
    <location>
        <position position="17"/>
    </location>
    <ligand>
        <name>substrate</name>
    </ligand>
</feature>
<feature type="binding site" evidence="1">
    <location>
        <position position="17"/>
    </location>
    <ligand>
        <name>Zn(2+)</name>
        <dbReference type="ChEBI" id="CHEBI:29105"/>
        <note>catalytic</note>
    </ligand>
</feature>
<feature type="binding site" evidence="1">
    <location>
        <position position="19"/>
    </location>
    <ligand>
        <name>substrate</name>
    </ligand>
</feature>
<feature type="binding site" evidence="1">
    <location>
        <position position="172"/>
    </location>
    <ligand>
        <name>substrate</name>
    </ligand>
</feature>
<feature type="binding site" evidence="1">
    <location>
        <position position="199"/>
    </location>
    <ligand>
        <name>Zn(2+)</name>
        <dbReference type="ChEBI" id="CHEBI:29105"/>
        <note>catalytic</note>
    </ligand>
</feature>
<feature type="binding site" evidence="1">
    <location>
        <position position="279"/>
    </location>
    <ligand>
        <name>Zn(2+)</name>
        <dbReference type="ChEBI" id="CHEBI:29105"/>
        <note>catalytic</note>
    </ligand>
</feature>
<feature type="site" description="Important for catalytic activity" evidence="1">
    <location>
        <position position="222"/>
    </location>
</feature>
<evidence type="ECO:0000255" key="1">
    <source>
        <dbReference type="HAMAP-Rule" id="MF_00540"/>
    </source>
</evidence>
<gene>
    <name evidence="1" type="primary">add</name>
    <name type="ordered locus">LSEI_2207</name>
</gene>
<comment type="function">
    <text evidence="1">Catalyzes the hydrolytic deamination of adenosine and 2-deoxyadenosine.</text>
</comment>
<comment type="catalytic activity">
    <reaction evidence="1">
        <text>adenosine + H2O + H(+) = inosine + NH4(+)</text>
        <dbReference type="Rhea" id="RHEA:24408"/>
        <dbReference type="ChEBI" id="CHEBI:15377"/>
        <dbReference type="ChEBI" id="CHEBI:15378"/>
        <dbReference type="ChEBI" id="CHEBI:16335"/>
        <dbReference type="ChEBI" id="CHEBI:17596"/>
        <dbReference type="ChEBI" id="CHEBI:28938"/>
        <dbReference type="EC" id="3.5.4.4"/>
    </reaction>
    <physiologicalReaction direction="left-to-right" evidence="1">
        <dbReference type="Rhea" id="RHEA:24409"/>
    </physiologicalReaction>
</comment>
<comment type="catalytic activity">
    <reaction evidence="1">
        <text>2'-deoxyadenosine + H2O + H(+) = 2'-deoxyinosine + NH4(+)</text>
        <dbReference type="Rhea" id="RHEA:28190"/>
        <dbReference type="ChEBI" id="CHEBI:15377"/>
        <dbReference type="ChEBI" id="CHEBI:15378"/>
        <dbReference type="ChEBI" id="CHEBI:17256"/>
        <dbReference type="ChEBI" id="CHEBI:28938"/>
        <dbReference type="ChEBI" id="CHEBI:28997"/>
        <dbReference type="EC" id="3.5.4.4"/>
    </reaction>
    <physiologicalReaction direction="left-to-right" evidence="1">
        <dbReference type="Rhea" id="RHEA:28191"/>
    </physiologicalReaction>
</comment>
<comment type="cofactor">
    <cofactor evidence="1">
        <name>Zn(2+)</name>
        <dbReference type="ChEBI" id="CHEBI:29105"/>
    </cofactor>
    <text evidence="1">Binds 1 zinc ion per subunit.</text>
</comment>
<comment type="similarity">
    <text evidence="1">Belongs to the metallo-dependent hydrolases superfamily. Adenosine and AMP deaminases family. Adenosine deaminase subfamily.</text>
</comment>
<accession>Q036B8</accession>
<reference key="1">
    <citation type="journal article" date="2006" name="Proc. Natl. Acad. Sci. U.S.A.">
        <title>Comparative genomics of the lactic acid bacteria.</title>
        <authorList>
            <person name="Makarova K.S."/>
            <person name="Slesarev A."/>
            <person name="Wolf Y.I."/>
            <person name="Sorokin A."/>
            <person name="Mirkin B."/>
            <person name="Koonin E.V."/>
            <person name="Pavlov A."/>
            <person name="Pavlova N."/>
            <person name="Karamychev V."/>
            <person name="Polouchine N."/>
            <person name="Shakhova V."/>
            <person name="Grigoriev I."/>
            <person name="Lou Y."/>
            <person name="Rohksar D."/>
            <person name="Lucas S."/>
            <person name="Huang K."/>
            <person name="Goodstein D.M."/>
            <person name="Hawkins T."/>
            <person name="Plengvidhya V."/>
            <person name="Welker D."/>
            <person name="Hughes J."/>
            <person name="Goh Y."/>
            <person name="Benson A."/>
            <person name="Baldwin K."/>
            <person name="Lee J.-H."/>
            <person name="Diaz-Muniz I."/>
            <person name="Dosti B."/>
            <person name="Smeianov V."/>
            <person name="Wechter W."/>
            <person name="Barabote R."/>
            <person name="Lorca G."/>
            <person name="Altermann E."/>
            <person name="Barrangou R."/>
            <person name="Ganesan B."/>
            <person name="Xie Y."/>
            <person name="Rawsthorne H."/>
            <person name="Tamir D."/>
            <person name="Parker C."/>
            <person name="Breidt F."/>
            <person name="Broadbent J.R."/>
            <person name="Hutkins R."/>
            <person name="O'Sullivan D."/>
            <person name="Steele J."/>
            <person name="Unlu G."/>
            <person name="Saier M.H. Jr."/>
            <person name="Klaenhammer T."/>
            <person name="Richardson P."/>
            <person name="Kozyavkin S."/>
            <person name="Weimer B.C."/>
            <person name="Mills D.A."/>
        </authorList>
    </citation>
    <scope>NUCLEOTIDE SEQUENCE [LARGE SCALE GENOMIC DNA]</scope>
    <source>
        <strain>ATCC 334 / BCRC 17002 / CCUG 31169 / CIP 107868 / KCTC 3260 / NRRL B-441</strain>
    </source>
</reference>
<name>ADD_LACP3</name>
<protein>
    <recommendedName>
        <fullName evidence="1">Adenosine deaminase</fullName>
        <ecNumber evidence="1">3.5.4.4</ecNumber>
    </recommendedName>
    <alternativeName>
        <fullName evidence="1">Adenosine aminohydrolase</fullName>
    </alternativeName>
</protein>
<proteinExistence type="inferred from homology"/>